<comment type="function">
    <text evidence="1">Involved in the binding of tRNA to the ribosomes.</text>
</comment>
<comment type="subunit">
    <text evidence="1">Part of the 30S ribosomal subunit.</text>
</comment>
<comment type="similarity">
    <text evidence="1">Belongs to the universal ribosomal protein uS10 family.</text>
</comment>
<gene>
    <name evidence="1" type="primary">rpsJ</name>
    <name type="ordered locus">ABO_0396</name>
</gene>
<proteinExistence type="inferred from homology"/>
<evidence type="ECO:0000255" key="1">
    <source>
        <dbReference type="HAMAP-Rule" id="MF_00508"/>
    </source>
</evidence>
<evidence type="ECO:0000305" key="2"/>
<sequence>MANQRIRIRLKAFDHRLIDQSAQEIVDTAKRTGAQVTGPIPLPTRKERFTVLVSPHVNKDARDQYEIRTHKRLVDIVEPTDKTVDALMKLDLAAGVDVQISLG</sequence>
<dbReference type="EMBL" id="AM286690">
    <property type="protein sequence ID" value="CAL15844.1"/>
    <property type="molecule type" value="Genomic_DNA"/>
</dbReference>
<dbReference type="RefSeq" id="WP_007148458.1">
    <property type="nucleotide sequence ID" value="NC_008260.1"/>
</dbReference>
<dbReference type="SMR" id="Q0VSK4"/>
<dbReference type="STRING" id="393595.ABO_0396"/>
<dbReference type="KEGG" id="abo:ABO_0396"/>
<dbReference type="eggNOG" id="COG0051">
    <property type="taxonomic scope" value="Bacteria"/>
</dbReference>
<dbReference type="HOGENOM" id="CLU_122625_1_3_6"/>
<dbReference type="OrthoDB" id="9804464at2"/>
<dbReference type="Proteomes" id="UP000008871">
    <property type="component" value="Chromosome"/>
</dbReference>
<dbReference type="GO" id="GO:1990904">
    <property type="term" value="C:ribonucleoprotein complex"/>
    <property type="evidence" value="ECO:0007669"/>
    <property type="project" value="UniProtKB-KW"/>
</dbReference>
<dbReference type="GO" id="GO:0005840">
    <property type="term" value="C:ribosome"/>
    <property type="evidence" value="ECO:0007669"/>
    <property type="project" value="UniProtKB-KW"/>
</dbReference>
<dbReference type="GO" id="GO:0003735">
    <property type="term" value="F:structural constituent of ribosome"/>
    <property type="evidence" value="ECO:0007669"/>
    <property type="project" value="InterPro"/>
</dbReference>
<dbReference type="GO" id="GO:0000049">
    <property type="term" value="F:tRNA binding"/>
    <property type="evidence" value="ECO:0007669"/>
    <property type="project" value="UniProtKB-UniRule"/>
</dbReference>
<dbReference type="GO" id="GO:0006412">
    <property type="term" value="P:translation"/>
    <property type="evidence" value="ECO:0007669"/>
    <property type="project" value="UniProtKB-UniRule"/>
</dbReference>
<dbReference type="FunFam" id="3.30.70.600:FF:000001">
    <property type="entry name" value="30S ribosomal protein S10"/>
    <property type="match status" value="1"/>
</dbReference>
<dbReference type="Gene3D" id="3.30.70.600">
    <property type="entry name" value="Ribosomal protein S10 domain"/>
    <property type="match status" value="1"/>
</dbReference>
<dbReference type="HAMAP" id="MF_00508">
    <property type="entry name" value="Ribosomal_uS10"/>
    <property type="match status" value="1"/>
</dbReference>
<dbReference type="InterPro" id="IPR001848">
    <property type="entry name" value="Ribosomal_uS10"/>
</dbReference>
<dbReference type="InterPro" id="IPR018268">
    <property type="entry name" value="Ribosomal_uS10_CS"/>
</dbReference>
<dbReference type="InterPro" id="IPR027486">
    <property type="entry name" value="Ribosomal_uS10_dom"/>
</dbReference>
<dbReference type="InterPro" id="IPR036838">
    <property type="entry name" value="Ribosomal_uS10_dom_sf"/>
</dbReference>
<dbReference type="NCBIfam" id="NF001861">
    <property type="entry name" value="PRK00596.1"/>
    <property type="match status" value="1"/>
</dbReference>
<dbReference type="NCBIfam" id="TIGR01049">
    <property type="entry name" value="rpsJ_bact"/>
    <property type="match status" value="1"/>
</dbReference>
<dbReference type="PANTHER" id="PTHR11700">
    <property type="entry name" value="30S RIBOSOMAL PROTEIN S10 FAMILY MEMBER"/>
    <property type="match status" value="1"/>
</dbReference>
<dbReference type="Pfam" id="PF00338">
    <property type="entry name" value="Ribosomal_S10"/>
    <property type="match status" value="1"/>
</dbReference>
<dbReference type="PRINTS" id="PR00971">
    <property type="entry name" value="RIBOSOMALS10"/>
</dbReference>
<dbReference type="SMART" id="SM01403">
    <property type="entry name" value="Ribosomal_S10"/>
    <property type="match status" value="1"/>
</dbReference>
<dbReference type="SUPFAM" id="SSF54999">
    <property type="entry name" value="Ribosomal protein S10"/>
    <property type="match status" value="1"/>
</dbReference>
<dbReference type="PROSITE" id="PS00361">
    <property type="entry name" value="RIBOSOMAL_S10"/>
    <property type="match status" value="1"/>
</dbReference>
<keyword id="KW-1185">Reference proteome</keyword>
<keyword id="KW-0687">Ribonucleoprotein</keyword>
<keyword id="KW-0689">Ribosomal protein</keyword>
<name>RS10_ALCBS</name>
<feature type="chain" id="PRO_0000258536" description="Small ribosomal subunit protein uS10">
    <location>
        <begin position="1"/>
        <end position="103"/>
    </location>
</feature>
<reference key="1">
    <citation type="journal article" date="2006" name="Nat. Biotechnol.">
        <title>Genome sequence of the ubiquitous hydrocarbon-degrading marine bacterium Alcanivorax borkumensis.</title>
        <authorList>
            <person name="Schneiker S."/>
            <person name="Martins dos Santos V.A.P."/>
            <person name="Bartels D."/>
            <person name="Bekel T."/>
            <person name="Brecht M."/>
            <person name="Buhrmester J."/>
            <person name="Chernikova T.N."/>
            <person name="Denaro R."/>
            <person name="Ferrer M."/>
            <person name="Gertler C."/>
            <person name="Goesmann A."/>
            <person name="Golyshina O.V."/>
            <person name="Kaminski F."/>
            <person name="Khachane A.N."/>
            <person name="Lang S."/>
            <person name="Linke B."/>
            <person name="McHardy A.C."/>
            <person name="Meyer F."/>
            <person name="Nechitaylo T."/>
            <person name="Puehler A."/>
            <person name="Regenhardt D."/>
            <person name="Rupp O."/>
            <person name="Sabirova J.S."/>
            <person name="Selbitschka W."/>
            <person name="Yakimov M.M."/>
            <person name="Timmis K.N."/>
            <person name="Vorhoelter F.-J."/>
            <person name="Weidner S."/>
            <person name="Kaiser O."/>
            <person name="Golyshin P.N."/>
        </authorList>
    </citation>
    <scope>NUCLEOTIDE SEQUENCE [LARGE SCALE GENOMIC DNA]</scope>
    <source>
        <strain>ATCC 700651 / DSM 11573 / NCIMB 13689 / SK2</strain>
    </source>
</reference>
<accession>Q0VSK4</accession>
<protein>
    <recommendedName>
        <fullName evidence="1">Small ribosomal subunit protein uS10</fullName>
    </recommendedName>
    <alternativeName>
        <fullName evidence="2">30S ribosomal protein S10</fullName>
    </alternativeName>
</protein>
<organism>
    <name type="scientific">Alcanivorax borkumensis (strain ATCC 700651 / DSM 11573 / NCIMB 13689 / SK2)</name>
    <dbReference type="NCBI Taxonomy" id="393595"/>
    <lineage>
        <taxon>Bacteria</taxon>
        <taxon>Pseudomonadati</taxon>
        <taxon>Pseudomonadota</taxon>
        <taxon>Gammaproteobacteria</taxon>
        <taxon>Oceanospirillales</taxon>
        <taxon>Alcanivoracaceae</taxon>
        <taxon>Alcanivorax</taxon>
    </lineage>
</organism>